<gene>
    <name evidence="1" type="primary">thiM</name>
    <name type="synonym">thiK</name>
    <name type="ordered locus">BH3349</name>
</gene>
<name>THIM_HALH5</name>
<protein>
    <recommendedName>
        <fullName evidence="1">Hydroxyethylthiazole kinase</fullName>
        <ecNumber evidence="1">2.7.1.50</ecNumber>
    </recommendedName>
    <alternativeName>
        <fullName evidence="1">4-methyl-5-beta-hydroxyethylthiazole kinase</fullName>
        <shortName evidence="1">TH kinase</shortName>
        <shortName evidence="1">Thz kinase</shortName>
    </alternativeName>
</protein>
<proteinExistence type="inferred from homology"/>
<feature type="chain" id="PRO_0000156926" description="Hydroxyethylthiazole kinase">
    <location>
        <begin position="1"/>
        <end position="261"/>
    </location>
</feature>
<feature type="binding site" evidence="1">
    <location>
        <position position="38"/>
    </location>
    <ligand>
        <name>substrate</name>
    </ligand>
</feature>
<feature type="binding site" evidence="1">
    <location>
        <position position="114"/>
    </location>
    <ligand>
        <name>ATP</name>
        <dbReference type="ChEBI" id="CHEBI:30616"/>
    </ligand>
</feature>
<feature type="binding site" evidence="1">
    <location>
        <position position="159"/>
    </location>
    <ligand>
        <name>ATP</name>
        <dbReference type="ChEBI" id="CHEBI:30616"/>
    </ligand>
</feature>
<feature type="binding site" evidence="1">
    <location>
        <position position="186"/>
    </location>
    <ligand>
        <name>substrate</name>
    </ligand>
</feature>
<dbReference type="EC" id="2.7.1.50" evidence="1"/>
<dbReference type="EMBL" id="BA000004">
    <property type="protein sequence ID" value="BAB07068.1"/>
    <property type="molecule type" value="Genomic_DNA"/>
</dbReference>
<dbReference type="PIR" id="E84068">
    <property type="entry name" value="E84068"/>
</dbReference>
<dbReference type="RefSeq" id="WP_010899490.1">
    <property type="nucleotide sequence ID" value="NC_002570.2"/>
</dbReference>
<dbReference type="SMR" id="Q9K7L2"/>
<dbReference type="STRING" id="272558.gene:10729262"/>
<dbReference type="KEGG" id="bha:BH3349"/>
<dbReference type="eggNOG" id="COG2145">
    <property type="taxonomic scope" value="Bacteria"/>
</dbReference>
<dbReference type="HOGENOM" id="CLU_019943_0_1_9"/>
<dbReference type="OrthoDB" id="9778146at2"/>
<dbReference type="UniPathway" id="UPA00060">
    <property type="reaction ID" value="UER00139"/>
</dbReference>
<dbReference type="Proteomes" id="UP000001258">
    <property type="component" value="Chromosome"/>
</dbReference>
<dbReference type="GO" id="GO:0005524">
    <property type="term" value="F:ATP binding"/>
    <property type="evidence" value="ECO:0007669"/>
    <property type="project" value="UniProtKB-UniRule"/>
</dbReference>
<dbReference type="GO" id="GO:0004417">
    <property type="term" value="F:hydroxyethylthiazole kinase activity"/>
    <property type="evidence" value="ECO:0007669"/>
    <property type="project" value="UniProtKB-UniRule"/>
</dbReference>
<dbReference type="GO" id="GO:0000287">
    <property type="term" value="F:magnesium ion binding"/>
    <property type="evidence" value="ECO:0007669"/>
    <property type="project" value="UniProtKB-UniRule"/>
</dbReference>
<dbReference type="GO" id="GO:0009228">
    <property type="term" value="P:thiamine biosynthetic process"/>
    <property type="evidence" value="ECO:0007669"/>
    <property type="project" value="UniProtKB-KW"/>
</dbReference>
<dbReference type="GO" id="GO:0009229">
    <property type="term" value="P:thiamine diphosphate biosynthetic process"/>
    <property type="evidence" value="ECO:0007669"/>
    <property type="project" value="UniProtKB-UniRule"/>
</dbReference>
<dbReference type="CDD" id="cd01170">
    <property type="entry name" value="THZ_kinase"/>
    <property type="match status" value="1"/>
</dbReference>
<dbReference type="Gene3D" id="3.40.1190.20">
    <property type="match status" value="1"/>
</dbReference>
<dbReference type="HAMAP" id="MF_00228">
    <property type="entry name" value="Thz_kinase"/>
    <property type="match status" value="1"/>
</dbReference>
<dbReference type="InterPro" id="IPR000417">
    <property type="entry name" value="Hyethyz_kinase"/>
</dbReference>
<dbReference type="InterPro" id="IPR029056">
    <property type="entry name" value="Ribokinase-like"/>
</dbReference>
<dbReference type="NCBIfam" id="NF006830">
    <property type="entry name" value="PRK09355.1"/>
    <property type="match status" value="1"/>
</dbReference>
<dbReference type="NCBIfam" id="TIGR00694">
    <property type="entry name" value="thiM"/>
    <property type="match status" value="1"/>
</dbReference>
<dbReference type="Pfam" id="PF02110">
    <property type="entry name" value="HK"/>
    <property type="match status" value="1"/>
</dbReference>
<dbReference type="PIRSF" id="PIRSF000513">
    <property type="entry name" value="Thz_kinase"/>
    <property type="match status" value="1"/>
</dbReference>
<dbReference type="PRINTS" id="PR01099">
    <property type="entry name" value="HYETHTZKNASE"/>
</dbReference>
<dbReference type="SUPFAM" id="SSF53613">
    <property type="entry name" value="Ribokinase-like"/>
    <property type="match status" value="1"/>
</dbReference>
<keyword id="KW-0067">ATP-binding</keyword>
<keyword id="KW-0418">Kinase</keyword>
<keyword id="KW-0460">Magnesium</keyword>
<keyword id="KW-0479">Metal-binding</keyword>
<keyword id="KW-0547">Nucleotide-binding</keyword>
<keyword id="KW-1185">Reference proteome</keyword>
<keyword id="KW-0784">Thiamine biosynthesis</keyword>
<keyword id="KW-0808">Transferase</keyword>
<organism>
    <name type="scientific">Halalkalibacterium halodurans (strain ATCC BAA-125 / DSM 18197 / FERM 7344 / JCM 9153 / C-125)</name>
    <name type="common">Bacillus halodurans</name>
    <dbReference type="NCBI Taxonomy" id="272558"/>
    <lineage>
        <taxon>Bacteria</taxon>
        <taxon>Bacillati</taxon>
        <taxon>Bacillota</taxon>
        <taxon>Bacilli</taxon>
        <taxon>Bacillales</taxon>
        <taxon>Bacillaceae</taxon>
        <taxon>Halalkalibacterium (ex Joshi et al. 2022)</taxon>
    </lineage>
</organism>
<sequence>MSIEMLRKSNPLIHCMTNVVVTNFTANGLLAVGASPVMAYAKEEVADMAKVANALLLNIGTLSAESIDNMIIAGKAANKAGAPVVLDPVGAGATVFRTESCKRILKEVDVTIVRGNGGEIAALSDQAGTVKGVDGSIDSDPVELAKHAANVLNSAVVVTGEVDVVTDGTGTVCGYNGHPWLTKVVGTGCLSGAIVAAFASLKTDDFLEVIGYGLVAYGVAAEKAYEETKAKGYGSFQTAFLNQLGRLTDEDVKQHGRFERS</sequence>
<evidence type="ECO:0000255" key="1">
    <source>
        <dbReference type="HAMAP-Rule" id="MF_00228"/>
    </source>
</evidence>
<reference key="1">
    <citation type="journal article" date="2000" name="Nucleic Acids Res.">
        <title>Complete genome sequence of the alkaliphilic bacterium Bacillus halodurans and genomic sequence comparison with Bacillus subtilis.</title>
        <authorList>
            <person name="Takami H."/>
            <person name="Nakasone K."/>
            <person name="Takaki Y."/>
            <person name="Maeno G."/>
            <person name="Sasaki R."/>
            <person name="Masui N."/>
            <person name="Fuji F."/>
            <person name="Hirama C."/>
            <person name="Nakamura Y."/>
            <person name="Ogasawara N."/>
            <person name="Kuhara S."/>
            <person name="Horikoshi K."/>
        </authorList>
    </citation>
    <scope>NUCLEOTIDE SEQUENCE [LARGE SCALE GENOMIC DNA]</scope>
    <source>
        <strain>ATCC BAA-125 / DSM 18197 / FERM 7344 / JCM 9153 / C-125</strain>
    </source>
</reference>
<accession>Q9K7L2</accession>
<comment type="function">
    <text evidence="1">Catalyzes the phosphorylation of the hydroxyl group of 4-methyl-5-beta-hydroxyethylthiazole (THZ).</text>
</comment>
<comment type="catalytic activity">
    <reaction evidence="1">
        <text>5-(2-hydroxyethyl)-4-methylthiazole + ATP = 4-methyl-5-(2-phosphooxyethyl)-thiazole + ADP + H(+)</text>
        <dbReference type="Rhea" id="RHEA:24212"/>
        <dbReference type="ChEBI" id="CHEBI:15378"/>
        <dbReference type="ChEBI" id="CHEBI:17957"/>
        <dbReference type="ChEBI" id="CHEBI:30616"/>
        <dbReference type="ChEBI" id="CHEBI:58296"/>
        <dbReference type="ChEBI" id="CHEBI:456216"/>
        <dbReference type="EC" id="2.7.1.50"/>
    </reaction>
</comment>
<comment type="cofactor">
    <cofactor evidence="1">
        <name>Mg(2+)</name>
        <dbReference type="ChEBI" id="CHEBI:18420"/>
    </cofactor>
</comment>
<comment type="pathway">
    <text evidence="1">Cofactor biosynthesis; thiamine diphosphate biosynthesis; 4-methyl-5-(2-phosphoethyl)-thiazole from 5-(2-hydroxyethyl)-4-methylthiazole: step 1/1.</text>
</comment>
<comment type="similarity">
    <text evidence="1">Belongs to the Thz kinase family.</text>
</comment>